<gene>
    <name evidence="1" type="primary">addA</name>
    <name type="synonym">rexA</name>
    <name type="ordered locus">SPs1340</name>
</gene>
<keyword id="KW-0067">ATP-binding</keyword>
<keyword id="KW-0227">DNA damage</keyword>
<keyword id="KW-0234">DNA repair</keyword>
<keyword id="KW-0238">DNA-binding</keyword>
<keyword id="KW-0269">Exonuclease</keyword>
<keyword id="KW-0347">Helicase</keyword>
<keyword id="KW-0378">Hydrolase</keyword>
<keyword id="KW-0413">Isomerase</keyword>
<keyword id="KW-0540">Nuclease</keyword>
<keyword id="KW-0547">Nucleotide-binding</keyword>
<dbReference type="EC" id="3.1.-.-" evidence="1"/>
<dbReference type="EC" id="5.6.2.4" evidence="1"/>
<dbReference type="EMBL" id="BA000034">
    <property type="protein sequence ID" value="BAC64435.1"/>
    <property type="status" value="ALT_INIT"/>
    <property type="molecule type" value="Genomic_DNA"/>
</dbReference>
<dbReference type="SMR" id="P0CZ53"/>
<dbReference type="KEGG" id="sps:SPs1340"/>
<dbReference type="HOGENOM" id="CLU_001114_3_1_9"/>
<dbReference type="GO" id="GO:0005829">
    <property type="term" value="C:cytosol"/>
    <property type="evidence" value="ECO:0007669"/>
    <property type="project" value="TreeGrafter"/>
</dbReference>
<dbReference type="GO" id="GO:0033202">
    <property type="term" value="C:DNA helicase complex"/>
    <property type="evidence" value="ECO:0007669"/>
    <property type="project" value="TreeGrafter"/>
</dbReference>
<dbReference type="GO" id="GO:0043138">
    <property type="term" value="F:3'-5' DNA helicase activity"/>
    <property type="evidence" value="ECO:0007669"/>
    <property type="project" value="UniProtKB-UniRule"/>
</dbReference>
<dbReference type="GO" id="GO:0008408">
    <property type="term" value="F:3'-5' exonuclease activity"/>
    <property type="evidence" value="ECO:0007669"/>
    <property type="project" value="UniProtKB-UniRule"/>
</dbReference>
<dbReference type="GO" id="GO:0005524">
    <property type="term" value="F:ATP binding"/>
    <property type="evidence" value="ECO:0007669"/>
    <property type="project" value="UniProtKB-UniRule"/>
</dbReference>
<dbReference type="GO" id="GO:0016887">
    <property type="term" value="F:ATP hydrolysis activity"/>
    <property type="evidence" value="ECO:0007669"/>
    <property type="project" value="RHEA"/>
</dbReference>
<dbReference type="GO" id="GO:0003690">
    <property type="term" value="F:double-stranded DNA binding"/>
    <property type="evidence" value="ECO:0007669"/>
    <property type="project" value="UniProtKB-UniRule"/>
</dbReference>
<dbReference type="GO" id="GO:0000724">
    <property type="term" value="P:double-strand break repair via homologous recombination"/>
    <property type="evidence" value="ECO:0007669"/>
    <property type="project" value="UniProtKB-UniRule"/>
</dbReference>
<dbReference type="CDD" id="cd17932">
    <property type="entry name" value="DEXQc_UvrD"/>
    <property type="match status" value="1"/>
</dbReference>
<dbReference type="Gene3D" id="3.90.320.10">
    <property type="match status" value="1"/>
</dbReference>
<dbReference type="Gene3D" id="3.40.50.300">
    <property type="entry name" value="P-loop containing nucleotide triphosphate hydrolases"/>
    <property type="match status" value="4"/>
</dbReference>
<dbReference type="Gene3D" id="1.10.486.10">
    <property type="entry name" value="PCRA, domain 4"/>
    <property type="match status" value="1"/>
</dbReference>
<dbReference type="HAMAP" id="MF_01451">
    <property type="entry name" value="AddA"/>
    <property type="match status" value="1"/>
</dbReference>
<dbReference type="InterPro" id="IPR014152">
    <property type="entry name" value="AddA"/>
</dbReference>
<dbReference type="InterPro" id="IPR014017">
    <property type="entry name" value="DNA_helicase_UvrD-like_C"/>
</dbReference>
<dbReference type="InterPro" id="IPR000212">
    <property type="entry name" value="DNA_helicase_UvrD/REP"/>
</dbReference>
<dbReference type="InterPro" id="IPR027417">
    <property type="entry name" value="P-loop_NTPase"/>
</dbReference>
<dbReference type="InterPro" id="IPR011604">
    <property type="entry name" value="PDDEXK-like_dom_sf"/>
</dbReference>
<dbReference type="InterPro" id="IPR038726">
    <property type="entry name" value="PDDEXK_AddAB-type"/>
</dbReference>
<dbReference type="InterPro" id="IPR011335">
    <property type="entry name" value="Restrct_endonuc-II-like"/>
</dbReference>
<dbReference type="InterPro" id="IPR014016">
    <property type="entry name" value="UvrD-like_ATP-bd"/>
</dbReference>
<dbReference type="NCBIfam" id="TIGR02785">
    <property type="entry name" value="addA_Gpos"/>
    <property type="match status" value="1"/>
</dbReference>
<dbReference type="PANTHER" id="PTHR11070:SF48">
    <property type="entry name" value="ATP-DEPENDENT HELICASE_NUCLEASE SUBUNIT A"/>
    <property type="match status" value="1"/>
</dbReference>
<dbReference type="PANTHER" id="PTHR11070">
    <property type="entry name" value="UVRD / RECB / PCRA DNA HELICASE FAMILY MEMBER"/>
    <property type="match status" value="1"/>
</dbReference>
<dbReference type="Pfam" id="PF12705">
    <property type="entry name" value="PDDEXK_1"/>
    <property type="match status" value="1"/>
</dbReference>
<dbReference type="Pfam" id="PF00580">
    <property type="entry name" value="UvrD-helicase"/>
    <property type="match status" value="1"/>
</dbReference>
<dbReference type="Pfam" id="PF13361">
    <property type="entry name" value="UvrD_C"/>
    <property type="match status" value="1"/>
</dbReference>
<dbReference type="SUPFAM" id="SSF52540">
    <property type="entry name" value="P-loop containing nucleoside triphosphate hydrolases"/>
    <property type="match status" value="1"/>
</dbReference>
<dbReference type="SUPFAM" id="SSF52980">
    <property type="entry name" value="Restriction endonuclease-like"/>
    <property type="match status" value="1"/>
</dbReference>
<dbReference type="PROSITE" id="PS51198">
    <property type="entry name" value="UVRD_HELICASE_ATP_BIND"/>
    <property type="match status" value="1"/>
</dbReference>
<dbReference type="PROSITE" id="PS51217">
    <property type="entry name" value="UVRD_HELICASE_CTER"/>
    <property type="match status" value="1"/>
</dbReference>
<comment type="function">
    <text evidence="1">The heterodimer acts as both an ATP-dependent DNA helicase and an ATP-dependent, dual-direction single-stranded exonuclease. Recognizes the chi site generating a DNA molecule suitable for the initiation of homologous recombination. The AddA nuclease domain is required for chi fragment generation; this subunit has the helicase and 3' -&gt; 5' nuclease activities.</text>
</comment>
<comment type="catalytic activity">
    <reaction evidence="1">
        <text>Couples ATP hydrolysis with the unwinding of duplex DNA by translocating in the 3'-5' direction.</text>
        <dbReference type="EC" id="5.6.2.4"/>
    </reaction>
</comment>
<comment type="catalytic activity">
    <reaction evidence="1">
        <text>ATP + H2O = ADP + phosphate + H(+)</text>
        <dbReference type="Rhea" id="RHEA:13065"/>
        <dbReference type="ChEBI" id="CHEBI:15377"/>
        <dbReference type="ChEBI" id="CHEBI:15378"/>
        <dbReference type="ChEBI" id="CHEBI:30616"/>
        <dbReference type="ChEBI" id="CHEBI:43474"/>
        <dbReference type="ChEBI" id="CHEBI:456216"/>
        <dbReference type="EC" id="5.6.2.4"/>
    </reaction>
</comment>
<comment type="cofactor">
    <cofactor evidence="1">
        <name>Mg(2+)</name>
        <dbReference type="ChEBI" id="CHEBI:18420"/>
    </cofactor>
</comment>
<comment type="subunit">
    <text evidence="1">Heterodimer of AddA and AddB/RexB.</text>
</comment>
<comment type="similarity">
    <text evidence="1">Belongs to the helicase family. AddA subfamily.</text>
</comment>
<comment type="sequence caution" evidence="2">
    <conflict type="erroneous initiation">
        <sequence resource="EMBL-CDS" id="BAC64435"/>
    </conflict>
</comment>
<organism>
    <name type="scientific">Streptococcus pyogenes serotype M3 (strain SSI-1)</name>
    <dbReference type="NCBI Taxonomy" id="193567"/>
    <lineage>
        <taxon>Bacteria</taxon>
        <taxon>Bacillati</taxon>
        <taxon>Bacillota</taxon>
        <taxon>Bacilli</taxon>
        <taxon>Lactobacillales</taxon>
        <taxon>Streptococcaceae</taxon>
        <taxon>Streptococcus</taxon>
    </lineage>
</organism>
<protein>
    <recommendedName>
        <fullName evidence="1">ATP-dependent helicase/nuclease subunit A</fullName>
        <ecNumber evidence="1">3.1.-.-</ecNumber>
        <ecNumber evidence="1">5.6.2.4</ecNumber>
    </recommendedName>
    <alternativeName>
        <fullName evidence="1">ATP-dependent helicase/nuclease AddA</fullName>
    </alternativeName>
    <alternativeName>
        <fullName evidence="1">DNA 3'-5' helicase AddA</fullName>
    </alternativeName>
</protein>
<evidence type="ECO:0000255" key="1">
    <source>
        <dbReference type="HAMAP-Rule" id="MF_01451"/>
    </source>
</evidence>
<evidence type="ECO:0000305" key="2"/>
<feature type="chain" id="PRO_0000411264" description="ATP-dependent helicase/nuclease subunit A">
    <location>
        <begin position="1"/>
        <end position="1222"/>
    </location>
</feature>
<feature type="domain" description="UvrD-like helicase ATP-binding" evidence="1">
    <location>
        <begin position="39"/>
        <end position="495"/>
    </location>
</feature>
<feature type="domain" description="UvrD-like helicase C-terminal" evidence="1">
    <location>
        <begin position="524"/>
        <end position="810"/>
    </location>
</feature>
<feature type="binding site" evidence="1">
    <location>
        <begin position="60"/>
        <end position="67"/>
    </location>
    <ligand>
        <name>ATP</name>
        <dbReference type="ChEBI" id="CHEBI:30616"/>
    </ligand>
</feature>
<sequence>MLFNINEKGEPLVISFAPFLSPEAIKHLQENERYSDQSQKRTAQQIEAIYTSGQNILVSASAGSGKTFVMVERILDKILRGVSIDRLFISTFTVKAATELRERIENKLYSQIAQTTDFQMKVYLTEQLQSLCQADIGTMDAFAQKVVSRYGYSIGISSQFRIMQDKAEQDVLKQEVFSKLFSEFMNQKEAPAFRALVKNFSGNCKDTSAFRELVYTCYSFSQSTENPKIWLQENFLSAAKTYQRLEDIPDHDIELLLLAMQDTANQLRDVTDMEDYGQLTKAGSRSAKYTKHLTIIEKLSDWVRDFKCLYGKAGLDRLIRDVTDLIPSGNDVTVSKVKYPVFKTLHQKLKQFRHLETILMYQKDCFPLLEQLQDFVFAFSEAYLAVKIQESAFEFSDIAHFAIKILEENTDIRQSYQQHYHEVMVDEYQDNNHMQERLLTLLSNGHNRFMVGDIKQSIYRFRQADPQIFNQKFRDYQKKPEQGKVILLKENFRSQSEVLNVSNAVFSHLMDESVGDVLYDEQHQLIAGSHAQTVPYLDRRAQLLLYNSDKDDGNAPSDSEGISFSEVTIVAKEIIKLHNDKGVPFEDITLLVSSRTRNDIISHTFNQYGIPIVTDGGQQNYLKSVEVMVMLDTLRTINNPRNDYALVALLRSPMFAFDEDDLARIALQKDNELDKDCLYDKMQRAVIGRGAHPELIHDTLLGKLNVFLKTLKSWRRYAKLGSLYDLIWKIFNDRFYFDFVASQAKAEQAQANLYALALRANQFEKSGYKGLYRFIKMIDKVLETQNDLADVEVAAPKQAVNLMTIHKSKGLQFPYVFILNCDKRFSMTDIHKSFILNRQHGIGIKYLADIKGLLGETTLNSVKVSMETLPYQLNKQELRLATLSEQMRLLYVAMTRAEKKVYFIGKASKSKSQEITDPKKLGKLLPLALREQLLTFQDWLLAIADIFSTEDLYFDVRFIEDSDLTQESVGRLQTPQLLNPDDLKDNRQSETIARALDMLEAVSQLNANYEAAIHLPTVRTPSQLKAAYEPLLEPIGVDIIEKSSRSLSDFTLPHFSKKAKVEASHIGSALHQLMQVLPLSKPINQQTLLDALRGIDSNEEVKTALDLKKIESFFCDTSLGQFFQTYQKHLYREAPFAILKVDPISQEEYVLRGIIDAYFLFDDHIVLVDYKTDKYKQPIELKKRYQQQLELYAEALTQTYKLPVTKRYLVLMGGGKPEIVEV</sequence>
<proteinExistence type="inferred from homology"/>
<accession>P0CZ53</accession>
<accession>Q878I0</accession>
<accession>Q8K815</accession>
<name>ADDA_STRPQ</name>
<reference key="1">
    <citation type="journal article" date="2003" name="Genome Res.">
        <title>Genome sequence of an M3 strain of Streptococcus pyogenes reveals a large-scale genomic rearrangement in invasive strains and new insights into phage evolution.</title>
        <authorList>
            <person name="Nakagawa I."/>
            <person name="Kurokawa K."/>
            <person name="Yamashita A."/>
            <person name="Nakata M."/>
            <person name="Tomiyasu Y."/>
            <person name="Okahashi N."/>
            <person name="Kawabata S."/>
            <person name="Yamazaki K."/>
            <person name="Shiba T."/>
            <person name="Yasunaga T."/>
            <person name="Hayashi H."/>
            <person name="Hattori M."/>
            <person name="Hamada S."/>
        </authorList>
    </citation>
    <scope>NUCLEOTIDE SEQUENCE [LARGE SCALE GENOMIC DNA]</scope>
    <source>
        <strain>SSI-1</strain>
    </source>
</reference>